<dbReference type="EMBL" id="DQ449070">
    <property type="protein sequence ID" value="ABE27593.1"/>
    <property type="molecule type" value="Genomic_DNA"/>
</dbReference>
<dbReference type="RefSeq" id="YP_007947897.1">
    <property type="nucleotide sequence ID" value="NC_021189.1"/>
</dbReference>
<dbReference type="SMR" id="Q0ZHI8"/>
<dbReference type="GeneID" id="15525413"/>
<dbReference type="GO" id="GO:0009535">
    <property type="term" value="C:chloroplast thylakoid membrane"/>
    <property type="evidence" value="ECO:0007669"/>
    <property type="project" value="UniProtKB-SubCell"/>
</dbReference>
<dbReference type="GO" id="GO:0030089">
    <property type="term" value="C:phycobilisome"/>
    <property type="evidence" value="ECO:0007669"/>
    <property type="project" value="UniProtKB-KW"/>
</dbReference>
<dbReference type="GO" id="GO:0015979">
    <property type="term" value="P:photosynthesis"/>
    <property type="evidence" value="ECO:0007669"/>
    <property type="project" value="UniProtKB-KW"/>
</dbReference>
<dbReference type="CDD" id="cd14767">
    <property type="entry name" value="PE_beta-like"/>
    <property type="match status" value="1"/>
</dbReference>
<dbReference type="Gene3D" id="1.10.490.20">
    <property type="entry name" value="Phycocyanins"/>
    <property type="match status" value="1"/>
</dbReference>
<dbReference type="InterPro" id="IPR009050">
    <property type="entry name" value="Globin-like_sf"/>
</dbReference>
<dbReference type="InterPro" id="IPR012128">
    <property type="entry name" value="Phycobilisome_asu/bsu"/>
</dbReference>
<dbReference type="InterPro" id="IPR038719">
    <property type="entry name" value="Phycobilisome_asu/bsu_sf"/>
</dbReference>
<dbReference type="PANTHER" id="PTHR34011:SF7">
    <property type="entry name" value="C-PHYCOCYANIN BETA SUBUNIT"/>
    <property type="match status" value="1"/>
</dbReference>
<dbReference type="PANTHER" id="PTHR34011">
    <property type="entry name" value="PHYCOBILISOME 32.1 KDA LINKER POLYPEPTIDE, PHYCOCYANIN-ASSOCIATED, ROD 2-RELATED"/>
    <property type="match status" value="1"/>
</dbReference>
<dbReference type="Pfam" id="PF00502">
    <property type="entry name" value="Phycobilisome"/>
    <property type="match status" value="1"/>
</dbReference>
<dbReference type="PIRSF" id="PIRSF000081">
    <property type="entry name" value="Phycocyanin"/>
    <property type="match status" value="1"/>
</dbReference>
<dbReference type="SUPFAM" id="SSF46458">
    <property type="entry name" value="Globin-like"/>
    <property type="match status" value="1"/>
</dbReference>
<geneLocation type="chloroplast"/>
<reference key="1">
    <citation type="submission" date="2006-03" db="EMBL/GenBank/DDBJ databases">
        <title>Cloning and sequence analysis of phycoerythrin gene of Porphyra haitanensis.</title>
        <authorList>
            <person name="Zuo Z.-H."/>
            <person name="Yan G.-L."/>
            <person name="Xu S.-Y."/>
            <person name="Chen Y.-X."/>
        </authorList>
    </citation>
    <scope>NUCLEOTIDE SEQUENCE [GENOMIC DNA]</scope>
</reference>
<keyword id="KW-0042">Antenna complex</keyword>
<keyword id="KW-0089">Bile pigment</keyword>
<keyword id="KW-0150">Chloroplast</keyword>
<keyword id="KW-0157">Chromophore</keyword>
<keyword id="KW-0249">Electron transport</keyword>
<keyword id="KW-0472">Membrane</keyword>
<keyword id="KW-0488">Methylation</keyword>
<keyword id="KW-0602">Photosynthesis</keyword>
<keyword id="KW-0605">Phycobilisome</keyword>
<keyword id="KW-0934">Plastid</keyword>
<keyword id="KW-0793">Thylakoid</keyword>
<keyword id="KW-0813">Transport</keyword>
<name>PHEB_PYRHA</name>
<feature type="chain" id="PRO_0000277338" description="R-phycoerythrin beta chain">
    <location>
        <begin position="1"/>
        <end position="177"/>
    </location>
</feature>
<feature type="binding site" description="covalent" evidence="1">
    <location>
        <position position="50"/>
    </location>
    <ligand>
        <name>phycourobilin</name>
        <dbReference type="ChEBI" id="CHEBI:189062"/>
    </ligand>
</feature>
<feature type="binding site" description="covalent" evidence="1">
    <location>
        <position position="61"/>
    </location>
    <ligand>
        <name>phycourobilin</name>
        <dbReference type="ChEBI" id="CHEBI:189062"/>
    </ligand>
</feature>
<feature type="binding site" description="covalent" evidence="1">
    <location>
        <position position="82"/>
    </location>
    <ligand>
        <name>(2R,3E)-phycoerythrobilin</name>
        <dbReference type="ChEBI" id="CHEBI:85276"/>
        <label>1</label>
    </ligand>
</feature>
<feature type="binding site" description="covalent" evidence="1">
    <location>
        <position position="158"/>
    </location>
    <ligand>
        <name>(2R,3E)-phycoerythrobilin</name>
        <dbReference type="ChEBI" id="CHEBI:85276"/>
        <label>2</label>
    </ligand>
</feature>
<feature type="modified residue" description="N4-methylasparagine" evidence="1">
    <location>
        <position position="72"/>
    </location>
</feature>
<proteinExistence type="inferred from homology"/>
<sequence length="177" mass="18423">MLDAFSRVVVNSDAKAAYVGGSDLQALKKFIADGNKRLDSVNAIVSNASCIVSDAVSGMICENPGLIAPGGNCYTNRRMAACLRDGEIILRYVSYALLAGDPSVLEDRCLNGLKETYIALGVPTNSSVRAVSIMKAAAVAFITNTASQRKMATADGDCSALASEVASYCDRVAAAIS</sequence>
<organism>
    <name type="scientific">Pyropia haitanensis</name>
    <name type="common">Red seaweed</name>
    <name type="synonym">Porphyra haitanensis</name>
    <dbReference type="NCBI Taxonomy" id="1262161"/>
    <lineage>
        <taxon>Eukaryota</taxon>
        <taxon>Rhodophyta</taxon>
        <taxon>Bangiophyceae</taxon>
        <taxon>Bangiales</taxon>
        <taxon>Bangiaceae</taxon>
        <taxon>Pyropia</taxon>
    </lineage>
</organism>
<accession>Q0ZHI8</accession>
<comment type="function">
    <text evidence="1">Light-harvesting photosynthetic bile pigment-protein from the phycobiliprotein complex.</text>
</comment>
<comment type="subunit">
    <text evidence="1">Heterodimer of an alpha and a beta chain.</text>
</comment>
<comment type="subcellular location">
    <subcellularLocation>
        <location evidence="1">Plastid</location>
        <location evidence="1">Chloroplast thylakoid membrane</location>
        <topology evidence="1">Peripheral membrane protein</topology>
        <orientation evidence="1">Stromal side</orientation>
    </subcellularLocation>
    <text evidence="1">Forms the periphery of the phycobilisome rod.</text>
</comment>
<comment type="PTM">
    <text evidence="1">Contains two covalently linked phycoerythrobilin chromophores and one covalently linked phycourobilin chromophore.</text>
</comment>
<comment type="similarity">
    <text evidence="2">Belongs to the phycobiliprotein family.</text>
</comment>
<evidence type="ECO:0000250" key="1"/>
<evidence type="ECO:0000305" key="2"/>
<gene>
    <name type="primary">cpeB</name>
</gene>
<protein>
    <recommendedName>
        <fullName>R-phycoerythrin beta chain</fullName>
    </recommendedName>
</protein>